<dbReference type="EMBL" id="BC121964">
    <property type="protein sequence ID" value="AAI21965.1"/>
    <property type="molecule type" value="mRNA"/>
</dbReference>
<dbReference type="RefSeq" id="NP_001072519.1">
    <property type="nucleotide sequence ID" value="NM_001079051.1"/>
</dbReference>
<dbReference type="SMR" id="Q0P4P2"/>
<dbReference type="FunCoup" id="Q0P4P2">
    <property type="interactions" value="86"/>
</dbReference>
<dbReference type="STRING" id="8364.ENSXETP00000011091"/>
<dbReference type="GlyCosmos" id="Q0P4P2">
    <property type="glycosylation" value="2 sites, No reported glycans"/>
</dbReference>
<dbReference type="PaxDb" id="8364-ENSXETP00000003088"/>
<dbReference type="DNASU" id="779974"/>
<dbReference type="GeneID" id="779974"/>
<dbReference type="KEGG" id="xtr:779974"/>
<dbReference type="AGR" id="Xenbase:XB-GENE-483361"/>
<dbReference type="CTD" id="84929"/>
<dbReference type="Xenbase" id="XB-GENE-483361">
    <property type="gene designation" value="fibcd1"/>
</dbReference>
<dbReference type="eggNOG" id="KOG2579">
    <property type="taxonomic scope" value="Eukaryota"/>
</dbReference>
<dbReference type="InParanoid" id="Q0P4P2"/>
<dbReference type="OrthoDB" id="9990035at2759"/>
<dbReference type="Proteomes" id="UP000008143">
    <property type="component" value="Chromosome 8"/>
</dbReference>
<dbReference type="Bgee" id="ENSXETG00000001469">
    <property type="expression patterns" value="Expressed in brain and 1 other cell type or tissue"/>
</dbReference>
<dbReference type="GO" id="GO:0016020">
    <property type="term" value="C:membrane"/>
    <property type="evidence" value="ECO:0007669"/>
    <property type="project" value="UniProtKB-SubCell"/>
</dbReference>
<dbReference type="GO" id="GO:0008061">
    <property type="term" value="F:chitin binding"/>
    <property type="evidence" value="ECO:0007669"/>
    <property type="project" value="UniProtKB-KW"/>
</dbReference>
<dbReference type="GO" id="GO:0046872">
    <property type="term" value="F:metal ion binding"/>
    <property type="evidence" value="ECO:0007669"/>
    <property type="project" value="UniProtKB-KW"/>
</dbReference>
<dbReference type="CDD" id="cd00087">
    <property type="entry name" value="FReD"/>
    <property type="match status" value="1"/>
</dbReference>
<dbReference type="FunFam" id="3.90.215.10:FF:000001">
    <property type="entry name" value="Tenascin isoform 1"/>
    <property type="match status" value="1"/>
</dbReference>
<dbReference type="Gene3D" id="3.90.215.10">
    <property type="entry name" value="Gamma Fibrinogen, chain A, domain 1"/>
    <property type="match status" value="1"/>
</dbReference>
<dbReference type="InterPro" id="IPR036056">
    <property type="entry name" value="Fibrinogen-like_C"/>
</dbReference>
<dbReference type="InterPro" id="IPR014716">
    <property type="entry name" value="Fibrinogen_a/b/g_C_1"/>
</dbReference>
<dbReference type="InterPro" id="IPR002181">
    <property type="entry name" value="Fibrinogen_a/b/g_C_dom"/>
</dbReference>
<dbReference type="InterPro" id="IPR050373">
    <property type="entry name" value="Fibrinogen_C-term_domain"/>
</dbReference>
<dbReference type="InterPro" id="IPR020837">
    <property type="entry name" value="Fibrinogen_CS"/>
</dbReference>
<dbReference type="NCBIfam" id="NF040941">
    <property type="entry name" value="GGGWT_bact"/>
    <property type="match status" value="1"/>
</dbReference>
<dbReference type="PANTHER" id="PTHR19143:SF45">
    <property type="entry name" value="FIBRINOGEN C DOMAIN-CONTAINING PROTEIN 1"/>
    <property type="match status" value="1"/>
</dbReference>
<dbReference type="PANTHER" id="PTHR19143">
    <property type="entry name" value="FIBRINOGEN/TENASCIN/ANGIOPOEITIN"/>
    <property type="match status" value="1"/>
</dbReference>
<dbReference type="Pfam" id="PF00147">
    <property type="entry name" value="Fibrinogen_C"/>
    <property type="match status" value="1"/>
</dbReference>
<dbReference type="SMART" id="SM00186">
    <property type="entry name" value="FBG"/>
    <property type="match status" value="1"/>
</dbReference>
<dbReference type="SUPFAM" id="SSF56496">
    <property type="entry name" value="Fibrinogen C-terminal domain-like"/>
    <property type="match status" value="1"/>
</dbReference>
<dbReference type="PROSITE" id="PS00514">
    <property type="entry name" value="FIBRINOGEN_C_1"/>
    <property type="match status" value="1"/>
</dbReference>
<dbReference type="PROSITE" id="PS51406">
    <property type="entry name" value="FIBRINOGEN_C_2"/>
    <property type="match status" value="1"/>
</dbReference>
<gene>
    <name type="primary">fibcd1</name>
</gene>
<reference key="1">
    <citation type="submission" date="2006-08" db="EMBL/GenBank/DDBJ databases">
        <authorList>
            <consortium name="NIH - Xenopus Gene Collection (XGC) project"/>
        </authorList>
    </citation>
    <scope>NUCLEOTIDE SEQUENCE [LARGE SCALE MRNA]</scope>
    <source>
        <tissue>Brain</tissue>
    </source>
</reference>
<name>FBCD1_XENTR</name>
<feature type="chain" id="PRO_0000294320" description="Fibrinogen C domain-containing protein 1">
    <location>
        <begin position="1"/>
        <end position="457"/>
    </location>
</feature>
<feature type="topological domain" description="Cytoplasmic" evidence="2">
    <location>
        <begin position="1"/>
        <end position="33"/>
    </location>
</feature>
<feature type="transmembrane region" description="Helical; Signal-anchor for type II membrane protein" evidence="2">
    <location>
        <begin position="34"/>
        <end position="54"/>
    </location>
</feature>
<feature type="topological domain" description="Extracellular" evidence="2">
    <location>
        <begin position="55"/>
        <end position="457"/>
    </location>
</feature>
<feature type="domain" description="Fibrinogen C-terminal" evidence="3">
    <location>
        <begin position="231"/>
        <end position="454"/>
    </location>
</feature>
<feature type="region of interest" description="Disordered" evidence="4">
    <location>
        <begin position="1"/>
        <end position="20"/>
    </location>
</feature>
<feature type="region of interest" description="Disordered" evidence="4">
    <location>
        <begin position="211"/>
        <end position="235"/>
    </location>
</feature>
<feature type="binding site" evidence="1">
    <location>
        <position position="389"/>
    </location>
    <ligand>
        <name>Ca(2+)</name>
        <dbReference type="ChEBI" id="CHEBI:29108"/>
    </ligand>
</feature>
<feature type="binding site" evidence="1">
    <location>
        <position position="391"/>
    </location>
    <ligand>
        <name>Ca(2+)</name>
        <dbReference type="ChEBI" id="CHEBI:29108"/>
    </ligand>
</feature>
<feature type="site" description="Implicated in ligand binding" evidence="1">
    <location>
        <position position="401"/>
    </location>
</feature>
<feature type="site" description="Implicated in ligand binding" evidence="1">
    <location>
        <position position="411"/>
    </location>
</feature>
<feature type="site" description="Implicated in ligand binding" evidence="1">
    <location>
        <position position="427"/>
    </location>
</feature>
<feature type="site" description="Implicated in ligand binding" evidence="1">
    <location>
        <position position="428"/>
    </location>
</feature>
<feature type="glycosylation site" description="N-linked (GlcNAc...) asparagine" evidence="2">
    <location>
        <position position="233"/>
    </location>
</feature>
<feature type="glycosylation site" description="N-linked (GlcNAc...) asparagine" evidence="2">
    <location>
        <position position="336"/>
    </location>
</feature>
<feature type="disulfide bond" evidence="3">
    <location>
        <begin position="240"/>
        <end position="269"/>
    </location>
</feature>
<feature type="disulfide bond" evidence="3">
    <location>
        <begin position="397"/>
        <end position="410"/>
    </location>
</feature>
<keyword id="KW-0106">Calcium</keyword>
<keyword id="KW-0147">Chitin-binding</keyword>
<keyword id="KW-1015">Disulfide bond</keyword>
<keyword id="KW-0325">Glycoprotein</keyword>
<keyword id="KW-0472">Membrane</keyword>
<keyword id="KW-0479">Metal-binding</keyword>
<keyword id="KW-1185">Reference proteome</keyword>
<keyword id="KW-0735">Signal-anchor</keyword>
<keyword id="KW-0812">Transmembrane</keyword>
<keyword id="KW-1133">Transmembrane helix</keyword>
<evidence type="ECO:0000250" key="1"/>
<evidence type="ECO:0000255" key="2"/>
<evidence type="ECO:0000255" key="3">
    <source>
        <dbReference type="PROSITE-ProRule" id="PRU00739"/>
    </source>
</evidence>
<evidence type="ECO:0000256" key="4">
    <source>
        <dbReference type="SAM" id="MobiDB-lite"/>
    </source>
</evidence>
<evidence type="ECO:0000305" key="5"/>
<proteinExistence type="evidence at transcript level"/>
<sequence>MGSDRWKNIGGAPQMEDSVQDKSQRKGCGYILCTVLLSVAVLLAVTVTGAVLFMNHYHAPSTEPPPVITTNMEDPNALVTIERADSSHINIFIDPNCPDPFPRLEGLQSALLSALADHDSEQKVAGGKERALLTSLSDQVAQMVSQVARQRADWENVKKVQNGLGAEIGALKNEQGRLIKLLSEGQSHVAQLGSSVSEVLETVQRELGSGRPRVKADLQRAPSRSSRPRGCANGSKPRDCYDIYMSGQQEDGVYSVFPIHYPSGFQVFCDMTTDGGGWTVFQRREDGSVNFFQGWEQYRDGFGKLTGEHWLGLQRIHLLTMQTHYQLRIDLEDFENATAYALYNTFGVGLFSVNPEEDGYPITISDYTGTAGDSLGKHSGMKFTTKDMDNDHSENNCASFYHGAWWYRNCHTSNLNGQYLRGHHASYADGIEWSSWTGWQYSLKFTEMKIRPQREEN</sequence>
<organism>
    <name type="scientific">Xenopus tropicalis</name>
    <name type="common">Western clawed frog</name>
    <name type="synonym">Silurana tropicalis</name>
    <dbReference type="NCBI Taxonomy" id="8364"/>
    <lineage>
        <taxon>Eukaryota</taxon>
        <taxon>Metazoa</taxon>
        <taxon>Chordata</taxon>
        <taxon>Craniata</taxon>
        <taxon>Vertebrata</taxon>
        <taxon>Euteleostomi</taxon>
        <taxon>Amphibia</taxon>
        <taxon>Batrachia</taxon>
        <taxon>Anura</taxon>
        <taxon>Pipoidea</taxon>
        <taxon>Pipidae</taxon>
        <taxon>Xenopodinae</taxon>
        <taxon>Xenopus</taxon>
        <taxon>Silurana</taxon>
    </lineage>
</organism>
<accession>Q0P4P2</accession>
<comment type="function">
    <text evidence="1">Acetyl group-binding receptor which shows a calcium-dependent binding to acetylated structures such as chitin, some N-acetylated carbohydrates, and amino acids.</text>
</comment>
<comment type="subunit">
    <text evidence="5">Homotetramer; disulfide-linked.</text>
</comment>
<comment type="subcellular location">
    <subcellularLocation>
        <location evidence="5">Membrane</location>
        <topology evidence="5">Single-pass type II membrane protein</topology>
    </subcellularLocation>
</comment>
<protein>
    <recommendedName>
        <fullName>Fibrinogen C domain-containing protein 1</fullName>
    </recommendedName>
</protein>